<gene>
    <name evidence="8" type="primary">Ankzf1</name>
    <name evidence="8" type="synonym">D1Ertd161e</name>
</gene>
<accession>Q80UU1</accession>
<accession>B9EKG0</accession>
<accession>Q9CZF5</accession>
<organism>
    <name type="scientific">Mus musculus</name>
    <name type="common">Mouse</name>
    <dbReference type="NCBI Taxonomy" id="10090"/>
    <lineage>
        <taxon>Eukaryota</taxon>
        <taxon>Metazoa</taxon>
        <taxon>Chordata</taxon>
        <taxon>Craniata</taxon>
        <taxon>Vertebrata</taxon>
        <taxon>Euteleostomi</taxon>
        <taxon>Mammalia</taxon>
        <taxon>Eutheria</taxon>
        <taxon>Euarchontoglires</taxon>
        <taxon>Glires</taxon>
        <taxon>Rodentia</taxon>
        <taxon>Myomorpha</taxon>
        <taxon>Muroidea</taxon>
        <taxon>Muridae</taxon>
        <taxon>Murinae</taxon>
        <taxon>Mus</taxon>
        <taxon>Mus</taxon>
    </lineage>
</organism>
<reference key="1">
    <citation type="journal article" date="2005" name="Science">
        <title>The transcriptional landscape of the mammalian genome.</title>
        <authorList>
            <person name="Carninci P."/>
            <person name="Kasukawa T."/>
            <person name="Katayama S."/>
            <person name="Gough J."/>
            <person name="Frith M.C."/>
            <person name="Maeda N."/>
            <person name="Oyama R."/>
            <person name="Ravasi T."/>
            <person name="Lenhard B."/>
            <person name="Wells C."/>
            <person name="Kodzius R."/>
            <person name="Shimokawa K."/>
            <person name="Bajic V.B."/>
            <person name="Brenner S.E."/>
            <person name="Batalov S."/>
            <person name="Forrest A.R."/>
            <person name="Zavolan M."/>
            <person name="Davis M.J."/>
            <person name="Wilming L.G."/>
            <person name="Aidinis V."/>
            <person name="Allen J.E."/>
            <person name="Ambesi-Impiombato A."/>
            <person name="Apweiler R."/>
            <person name="Aturaliya R.N."/>
            <person name="Bailey T.L."/>
            <person name="Bansal M."/>
            <person name="Baxter L."/>
            <person name="Beisel K.W."/>
            <person name="Bersano T."/>
            <person name="Bono H."/>
            <person name="Chalk A.M."/>
            <person name="Chiu K.P."/>
            <person name="Choudhary V."/>
            <person name="Christoffels A."/>
            <person name="Clutterbuck D.R."/>
            <person name="Crowe M.L."/>
            <person name="Dalla E."/>
            <person name="Dalrymple B.P."/>
            <person name="de Bono B."/>
            <person name="Della Gatta G."/>
            <person name="di Bernardo D."/>
            <person name="Down T."/>
            <person name="Engstrom P."/>
            <person name="Fagiolini M."/>
            <person name="Faulkner G."/>
            <person name="Fletcher C.F."/>
            <person name="Fukushima T."/>
            <person name="Furuno M."/>
            <person name="Futaki S."/>
            <person name="Gariboldi M."/>
            <person name="Georgii-Hemming P."/>
            <person name="Gingeras T.R."/>
            <person name="Gojobori T."/>
            <person name="Green R.E."/>
            <person name="Gustincich S."/>
            <person name="Harbers M."/>
            <person name="Hayashi Y."/>
            <person name="Hensch T.K."/>
            <person name="Hirokawa N."/>
            <person name="Hill D."/>
            <person name="Huminiecki L."/>
            <person name="Iacono M."/>
            <person name="Ikeo K."/>
            <person name="Iwama A."/>
            <person name="Ishikawa T."/>
            <person name="Jakt M."/>
            <person name="Kanapin A."/>
            <person name="Katoh M."/>
            <person name="Kawasawa Y."/>
            <person name="Kelso J."/>
            <person name="Kitamura H."/>
            <person name="Kitano H."/>
            <person name="Kollias G."/>
            <person name="Krishnan S.P."/>
            <person name="Kruger A."/>
            <person name="Kummerfeld S.K."/>
            <person name="Kurochkin I.V."/>
            <person name="Lareau L.F."/>
            <person name="Lazarevic D."/>
            <person name="Lipovich L."/>
            <person name="Liu J."/>
            <person name="Liuni S."/>
            <person name="McWilliam S."/>
            <person name="Madan Babu M."/>
            <person name="Madera M."/>
            <person name="Marchionni L."/>
            <person name="Matsuda H."/>
            <person name="Matsuzawa S."/>
            <person name="Miki H."/>
            <person name="Mignone F."/>
            <person name="Miyake S."/>
            <person name="Morris K."/>
            <person name="Mottagui-Tabar S."/>
            <person name="Mulder N."/>
            <person name="Nakano N."/>
            <person name="Nakauchi H."/>
            <person name="Ng P."/>
            <person name="Nilsson R."/>
            <person name="Nishiguchi S."/>
            <person name="Nishikawa S."/>
            <person name="Nori F."/>
            <person name="Ohara O."/>
            <person name="Okazaki Y."/>
            <person name="Orlando V."/>
            <person name="Pang K.C."/>
            <person name="Pavan W.J."/>
            <person name="Pavesi G."/>
            <person name="Pesole G."/>
            <person name="Petrovsky N."/>
            <person name="Piazza S."/>
            <person name="Reed J."/>
            <person name="Reid J.F."/>
            <person name="Ring B.Z."/>
            <person name="Ringwald M."/>
            <person name="Rost B."/>
            <person name="Ruan Y."/>
            <person name="Salzberg S.L."/>
            <person name="Sandelin A."/>
            <person name="Schneider C."/>
            <person name="Schoenbach C."/>
            <person name="Sekiguchi K."/>
            <person name="Semple C.A."/>
            <person name="Seno S."/>
            <person name="Sessa L."/>
            <person name="Sheng Y."/>
            <person name="Shibata Y."/>
            <person name="Shimada H."/>
            <person name="Shimada K."/>
            <person name="Silva D."/>
            <person name="Sinclair B."/>
            <person name="Sperling S."/>
            <person name="Stupka E."/>
            <person name="Sugiura K."/>
            <person name="Sultana R."/>
            <person name="Takenaka Y."/>
            <person name="Taki K."/>
            <person name="Tammoja K."/>
            <person name="Tan S.L."/>
            <person name="Tang S."/>
            <person name="Taylor M.S."/>
            <person name="Tegner J."/>
            <person name="Teichmann S.A."/>
            <person name="Ueda H.R."/>
            <person name="van Nimwegen E."/>
            <person name="Verardo R."/>
            <person name="Wei C.L."/>
            <person name="Yagi K."/>
            <person name="Yamanishi H."/>
            <person name="Zabarovsky E."/>
            <person name="Zhu S."/>
            <person name="Zimmer A."/>
            <person name="Hide W."/>
            <person name="Bult C."/>
            <person name="Grimmond S.M."/>
            <person name="Teasdale R.D."/>
            <person name="Liu E.T."/>
            <person name="Brusic V."/>
            <person name="Quackenbush J."/>
            <person name="Wahlestedt C."/>
            <person name="Mattick J.S."/>
            <person name="Hume D.A."/>
            <person name="Kai C."/>
            <person name="Sasaki D."/>
            <person name="Tomaru Y."/>
            <person name="Fukuda S."/>
            <person name="Kanamori-Katayama M."/>
            <person name="Suzuki M."/>
            <person name="Aoki J."/>
            <person name="Arakawa T."/>
            <person name="Iida J."/>
            <person name="Imamura K."/>
            <person name="Itoh M."/>
            <person name="Kato T."/>
            <person name="Kawaji H."/>
            <person name="Kawagashira N."/>
            <person name="Kawashima T."/>
            <person name="Kojima M."/>
            <person name="Kondo S."/>
            <person name="Konno H."/>
            <person name="Nakano K."/>
            <person name="Ninomiya N."/>
            <person name="Nishio T."/>
            <person name="Okada M."/>
            <person name="Plessy C."/>
            <person name="Shibata K."/>
            <person name="Shiraki T."/>
            <person name="Suzuki S."/>
            <person name="Tagami M."/>
            <person name="Waki K."/>
            <person name="Watahiki A."/>
            <person name="Okamura-Oho Y."/>
            <person name="Suzuki H."/>
            <person name="Kawai J."/>
            <person name="Hayashizaki Y."/>
        </authorList>
    </citation>
    <scope>NUCLEOTIDE SEQUENCE [LARGE SCALE MRNA] (ISOFORM 1)</scope>
    <source>
        <strain>NOD</strain>
        <tissue>Spleen</tissue>
    </source>
</reference>
<reference key="2">
    <citation type="journal article" date="2004" name="Genome Res.">
        <title>The status, quality, and expansion of the NIH full-length cDNA project: the Mammalian Gene Collection (MGC).</title>
        <authorList>
            <consortium name="The MGC Project Team"/>
        </authorList>
    </citation>
    <scope>NUCLEOTIDE SEQUENCE [LARGE SCALE MRNA] (ISOFORMS 1 AND 2)</scope>
    <source>
        <strain>C57BL/6NCr</strain>
        <tissue>Brain</tissue>
        <tissue>Hematopoietic stem cell</tissue>
    </source>
</reference>
<dbReference type="EC" id="3.1.-.-" evidence="2"/>
<dbReference type="EMBL" id="AK012672">
    <property type="protein sequence ID" value="BAB28398.1"/>
    <property type="molecule type" value="mRNA"/>
</dbReference>
<dbReference type="EMBL" id="AK156255">
    <property type="protein sequence ID" value="BAE33643.1"/>
    <property type="molecule type" value="mRNA"/>
</dbReference>
<dbReference type="EMBL" id="AK157405">
    <property type="status" value="NOT_ANNOTATED_CDS"/>
    <property type="molecule type" value="mRNA"/>
</dbReference>
<dbReference type="EMBL" id="BC051449">
    <property type="protein sequence ID" value="AAH51449.1"/>
    <property type="molecule type" value="mRNA"/>
</dbReference>
<dbReference type="EMBL" id="BC057896">
    <property type="protein sequence ID" value="AAH57896.1"/>
    <property type="molecule type" value="mRNA"/>
</dbReference>
<dbReference type="EMBL" id="BC150879">
    <property type="protein sequence ID" value="AAI50880.1"/>
    <property type="molecule type" value="mRNA"/>
</dbReference>
<dbReference type="CCDS" id="CCDS56632.1">
    <molecule id="Q80UU1-1"/>
</dbReference>
<dbReference type="RefSeq" id="NP_001254549.1">
    <property type="nucleotide sequence ID" value="NM_001267620.1"/>
</dbReference>
<dbReference type="SMR" id="Q80UU1"/>
<dbReference type="FunCoup" id="Q80UU1">
    <property type="interactions" value="1050"/>
</dbReference>
<dbReference type="IntAct" id="Q80UU1">
    <property type="interactions" value="1"/>
</dbReference>
<dbReference type="STRING" id="10090.ENSMUSP00000136163"/>
<dbReference type="iPTMnet" id="Q80UU1"/>
<dbReference type="PhosphoSitePlus" id="Q80UU1"/>
<dbReference type="jPOST" id="Q80UU1"/>
<dbReference type="PaxDb" id="10090-ENSMUSP00000136163"/>
<dbReference type="ProteomicsDB" id="296249">
    <molecule id="Q80UU1-1"/>
</dbReference>
<dbReference type="ProteomicsDB" id="296250">
    <molecule id="Q80UU1-2"/>
</dbReference>
<dbReference type="Pumba" id="Q80UU1"/>
<dbReference type="DNASU" id="52231"/>
<dbReference type="GeneID" id="52231"/>
<dbReference type="KEGG" id="mmu:52231"/>
<dbReference type="UCSC" id="uc029qpf.2">
    <molecule id="Q80UU1-1"/>
    <property type="organism name" value="mouse"/>
</dbReference>
<dbReference type="AGR" id="MGI:1098746"/>
<dbReference type="CTD" id="55139"/>
<dbReference type="MGI" id="MGI:1098746">
    <property type="gene designation" value="Ankzf1"/>
</dbReference>
<dbReference type="eggNOG" id="KOG2505">
    <property type="taxonomic scope" value="Eukaryota"/>
</dbReference>
<dbReference type="InParanoid" id="Q80UU1"/>
<dbReference type="OrthoDB" id="429841at2759"/>
<dbReference type="BioGRID-ORCS" id="52231">
    <property type="hits" value="1 hit in 81 CRISPR screens"/>
</dbReference>
<dbReference type="ChiTaRS" id="Ankzf1">
    <property type="organism name" value="mouse"/>
</dbReference>
<dbReference type="PRO" id="PR:Q80UU1"/>
<dbReference type="Proteomes" id="UP000000589">
    <property type="component" value="Unplaced"/>
</dbReference>
<dbReference type="RNAct" id="Q80UU1">
    <property type="molecule type" value="protein"/>
</dbReference>
<dbReference type="GO" id="GO:0005737">
    <property type="term" value="C:cytoplasm"/>
    <property type="evidence" value="ECO:0000250"/>
    <property type="project" value="UniProtKB"/>
</dbReference>
<dbReference type="GO" id="GO:0140101">
    <property type="term" value="F:catalytic activity, acting on a tRNA"/>
    <property type="evidence" value="ECO:0000250"/>
    <property type="project" value="UniProtKB"/>
</dbReference>
<dbReference type="GO" id="GO:0004521">
    <property type="term" value="F:RNA endonuclease activity"/>
    <property type="evidence" value="ECO:0000250"/>
    <property type="project" value="UniProtKB"/>
</dbReference>
<dbReference type="GO" id="GO:0008270">
    <property type="term" value="F:zinc ion binding"/>
    <property type="evidence" value="ECO:0007669"/>
    <property type="project" value="UniProtKB-KW"/>
</dbReference>
<dbReference type="GO" id="GO:0070301">
    <property type="term" value="P:cellular response to hydrogen peroxide"/>
    <property type="evidence" value="ECO:0000250"/>
    <property type="project" value="UniProtKB"/>
</dbReference>
<dbReference type="GO" id="GO:0006515">
    <property type="term" value="P:protein quality control for misfolded or incompletely synthesized proteins"/>
    <property type="evidence" value="ECO:0000250"/>
    <property type="project" value="UniProtKB"/>
</dbReference>
<dbReference type="GO" id="GO:0072344">
    <property type="term" value="P:rescue of stalled ribosome"/>
    <property type="evidence" value="ECO:0000250"/>
    <property type="project" value="UniProtKB"/>
</dbReference>
<dbReference type="FunFam" id="1.25.40.20:FF:000180">
    <property type="entry name" value="Ankyrin repeat and zinc finger domain containing 1"/>
    <property type="match status" value="1"/>
</dbReference>
<dbReference type="Gene3D" id="1.25.40.20">
    <property type="entry name" value="Ankyrin repeat-containing domain"/>
    <property type="match status" value="1"/>
</dbReference>
<dbReference type="InterPro" id="IPR002110">
    <property type="entry name" value="Ankyrin_rpt"/>
</dbReference>
<dbReference type="InterPro" id="IPR036770">
    <property type="entry name" value="Ankyrin_rpt-contain_sf"/>
</dbReference>
<dbReference type="InterPro" id="IPR047139">
    <property type="entry name" value="ANKZ1/VMS1"/>
</dbReference>
<dbReference type="InterPro" id="IPR041540">
    <property type="entry name" value="VATC"/>
</dbReference>
<dbReference type="InterPro" id="IPR041175">
    <property type="entry name" value="VLRF1/Vms1"/>
</dbReference>
<dbReference type="InterPro" id="IPR013087">
    <property type="entry name" value="Znf_C2H2_type"/>
</dbReference>
<dbReference type="PANTHER" id="PTHR16036">
    <property type="entry name" value="ANKYRIN REPEAT AND ZINC FINGER DOMAIN-CONTAINING PROTEIN 1"/>
    <property type="match status" value="1"/>
</dbReference>
<dbReference type="PANTHER" id="PTHR16036:SF2">
    <property type="entry name" value="TRNA ENDONUCLEASE ANKZF1"/>
    <property type="match status" value="1"/>
</dbReference>
<dbReference type="Pfam" id="PF00023">
    <property type="entry name" value="Ank"/>
    <property type="match status" value="1"/>
</dbReference>
<dbReference type="Pfam" id="PF18826">
    <property type="entry name" value="bVLRF1"/>
    <property type="match status" value="1"/>
</dbReference>
<dbReference type="Pfam" id="PF18716">
    <property type="entry name" value="VATC"/>
    <property type="match status" value="1"/>
</dbReference>
<dbReference type="SUPFAM" id="SSF48403">
    <property type="entry name" value="Ankyrin repeat"/>
    <property type="match status" value="1"/>
</dbReference>
<dbReference type="PROSITE" id="PS50297">
    <property type="entry name" value="ANK_REP_REGION"/>
    <property type="match status" value="1"/>
</dbReference>
<dbReference type="PROSITE" id="PS50088">
    <property type="entry name" value="ANK_REPEAT"/>
    <property type="match status" value="1"/>
</dbReference>
<dbReference type="PROSITE" id="PS52044">
    <property type="entry name" value="VLRF1"/>
    <property type="match status" value="1"/>
</dbReference>
<dbReference type="PROSITE" id="PS00028">
    <property type="entry name" value="ZINC_FINGER_C2H2_1"/>
    <property type="match status" value="1"/>
</dbReference>
<feature type="chain" id="PRO_0000247279" description="tRNA endonuclease ANKZF1">
    <location>
        <begin position="1"/>
        <end position="748"/>
    </location>
</feature>
<feature type="domain" description="VLRF1" evidence="4">
    <location>
        <begin position="227"/>
        <end position="370"/>
    </location>
</feature>
<feature type="repeat" description="ANK 1">
    <location>
        <begin position="515"/>
        <end position="545"/>
    </location>
</feature>
<feature type="repeat" description="ANK 2">
    <location>
        <begin position="556"/>
        <end position="585"/>
    </location>
</feature>
<feature type="zinc finger region" description="C2H2-type">
    <location>
        <begin position="96"/>
        <end position="120"/>
    </location>
</feature>
<feature type="region of interest" description="Disordered" evidence="5">
    <location>
        <begin position="135"/>
        <end position="185"/>
    </location>
</feature>
<feature type="region of interest" description="Disordered" evidence="5">
    <location>
        <begin position="383"/>
        <end position="438"/>
    </location>
</feature>
<feature type="region of interest" description="Disordered" evidence="5">
    <location>
        <begin position="460"/>
        <end position="497"/>
    </location>
</feature>
<feature type="region of interest" description="Disordered" evidence="5">
    <location>
        <begin position="621"/>
        <end position="677"/>
    </location>
</feature>
<feature type="region of interest" description="VCP/p97-interacting motif (VIM)" evidence="2">
    <location>
        <begin position="654"/>
        <end position="666"/>
    </location>
</feature>
<feature type="coiled-coil region" evidence="3">
    <location>
        <begin position="628"/>
        <end position="681"/>
    </location>
</feature>
<feature type="compositionally biased region" description="Low complexity" evidence="5">
    <location>
        <begin position="143"/>
        <end position="154"/>
    </location>
</feature>
<feature type="compositionally biased region" description="Acidic residues" evidence="5">
    <location>
        <begin position="155"/>
        <end position="167"/>
    </location>
</feature>
<feature type="compositionally biased region" description="Basic and acidic residues" evidence="5">
    <location>
        <begin position="169"/>
        <end position="179"/>
    </location>
</feature>
<feature type="compositionally biased region" description="Basic and acidic residues" evidence="5">
    <location>
        <begin position="383"/>
        <end position="408"/>
    </location>
</feature>
<feature type="compositionally biased region" description="Acidic residues" evidence="5">
    <location>
        <begin position="429"/>
        <end position="438"/>
    </location>
</feature>
<feature type="compositionally biased region" description="Polar residues" evidence="5">
    <location>
        <begin position="484"/>
        <end position="497"/>
    </location>
</feature>
<feature type="compositionally biased region" description="Basic and acidic residues" evidence="5">
    <location>
        <begin position="632"/>
        <end position="677"/>
    </location>
</feature>
<feature type="active site" evidence="4">
    <location>
        <position position="270"/>
    </location>
</feature>
<feature type="modified residue" description="Phosphoserine" evidence="2">
    <location>
        <position position="282"/>
    </location>
</feature>
<feature type="modified residue" description="Phosphoserine" evidence="2">
    <location>
        <position position="385"/>
    </location>
</feature>
<feature type="modified residue" description="Phosphoserine" evidence="2">
    <location>
        <position position="555"/>
    </location>
</feature>
<feature type="modified residue" description="Phosphothreonine" evidence="2">
    <location>
        <position position="629"/>
    </location>
</feature>
<feature type="modified residue" description="Phosphoserine" evidence="2">
    <location>
        <position position="702"/>
    </location>
</feature>
<feature type="splice variant" id="VSP_019961" description="In isoform 2." evidence="6">
    <original>IPPEKAELLLQNLQN</original>
    <variation>ASNSPDCVLTPNF</variation>
    <location>
        <begin position="211"/>
        <end position="225"/>
    </location>
</feature>
<feature type="splice variant" id="VSP_019962" description="In isoform 2." evidence="6">
    <location>
        <begin position="226"/>
        <end position="748"/>
    </location>
</feature>
<feature type="sequence conflict" description="In Ref. 2; AAH51449." evidence="7" ref="2">
    <original>P</original>
    <variation>S</variation>
    <location>
        <position position="4"/>
    </location>
</feature>
<feature type="sequence conflict" description="In Ref. 2; AAH51449." evidence="7" ref="2">
    <original>P</original>
    <variation>S</variation>
    <location>
        <position position="35"/>
    </location>
</feature>
<feature type="sequence conflict" description="In Ref. 2; AAH51449." evidence="7" ref="2">
    <original>S</original>
    <variation>T</variation>
    <location>
        <position position="73"/>
    </location>
</feature>
<proteinExistence type="evidence at protein level"/>
<comment type="function">
    <text evidence="2">Endonuclease that cleaves polypeptidyl-tRNAs downstream of the ribosome-associated quality control (RQC) pathway to release incompletely synthesized polypeptides for degradation. The RQC pathway disassembles aberrantly stalled translation complexes to recycle or degrade the constituent parts. ANKZF1 acts downstream disassembly of stalled ribosomes and specifically cleaves off the terminal 3'-CCA nucleotides universal to all tRNAs from polypeptidyl-tRNAs, releasing (1) ubiquitinated polypeptides from 60S ribosomal subunit for degradation and (2) cleaved tRNAs. ANKZF1-cleaved tRNAs are then repaired and recycled by ELAC1 and TRNT1. Also plays a role in the cellular response to hydrogen peroxide and in the maintenance of mitochondrial integrity under conditions of cellular stress.</text>
</comment>
<comment type="subunit">
    <text evidence="2">Interacts (via VIM motif) with VCP.</text>
</comment>
<comment type="interaction">
    <interactant intactId="EBI-9510971">
        <id>Q80UU1</id>
    </interactant>
    <interactant intactId="EBI-80597">
        <id>Q01853</id>
        <label>Vcp</label>
    </interactant>
    <organismsDiffer>false</organismsDiffer>
    <experiments>2</experiments>
</comment>
<comment type="subcellular location">
    <subcellularLocation>
        <location evidence="2">Cytoplasm</location>
    </subcellularLocation>
    <text evidence="2">Translocates to the mitochondria upon exposure to hydrogen peroxide.</text>
</comment>
<comment type="alternative products">
    <event type="alternative splicing"/>
    <isoform>
        <id>Q80UU1-1</id>
        <name>1</name>
        <sequence type="displayed"/>
    </isoform>
    <isoform>
        <id>Q80UU1-2</id>
        <name>2</name>
        <sequence type="described" ref="VSP_019961 VSP_019962"/>
    </isoform>
</comment>
<comment type="domain">
    <text evidence="1 4">The VLRF1 domain mediates binding to the 60S ribosomal subunit.</text>
</comment>
<comment type="similarity">
    <text evidence="4 7">Belongs to the ANKZF1/VMS1 family.</text>
</comment>
<comment type="sequence caution" evidence="7">
    <conflict type="frameshift">
        <sequence resource="EMBL" id="AK157405"/>
    </conflict>
</comment>
<name>ANKZ1_MOUSE</name>
<evidence type="ECO:0000250" key="1">
    <source>
        <dbReference type="UniProtKB" id="Q04311"/>
    </source>
</evidence>
<evidence type="ECO:0000250" key="2">
    <source>
        <dbReference type="UniProtKB" id="Q9H8Y5"/>
    </source>
</evidence>
<evidence type="ECO:0000255" key="3"/>
<evidence type="ECO:0000255" key="4">
    <source>
        <dbReference type="PROSITE-ProRule" id="PRU01389"/>
    </source>
</evidence>
<evidence type="ECO:0000256" key="5">
    <source>
        <dbReference type="SAM" id="MobiDB-lite"/>
    </source>
</evidence>
<evidence type="ECO:0000303" key="6">
    <source>
    </source>
</evidence>
<evidence type="ECO:0000305" key="7"/>
<evidence type="ECO:0000312" key="8">
    <source>
        <dbReference type="MGI" id="MGI:1098746"/>
    </source>
</evidence>
<protein>
    <recommendedName>
        <fullName evidence="7">tRNA endonuclease ANKZF1</fullName>
        <ecNumber evidence="2">3.1.-.-</ecNumber>
    </recommendedName>
    <alternativeName>
        <fullName evidence="7">Ankyrin repeat and zinc finger domain-containing protein 1</fullName>
    </alternativeName>
</protein>
<keyword id="KW-0025">Alternative splicing</keyword>
<keyword id="KW-0040">ANK repeat</keyword>
<keyword id="KW-0175">Coiled coil</keyword>
<keyword id="KW-0963">Cytoplasm</keyword>
<keyword id="KW-0255">Endonuclease</keyword>
<keyword id="KW-0378">Hydrolase</keyword>
<keyword id="KW-0479">Metal-binding</keyword>
<keyword id="KW-0540">Nuclease</keyword>
<keyword id="KW-0597">Phosphoprotein</keyword>
<keyword id="KW-1185">Reference proteome</keyword>
<keyword id="KW-0677">Repeat</keyword>
<keyword id="KW-0862">Zinc</keyword>
<keyword id="KW-0863">Zinc-finger</keyword>
<sequence length="748" mass="82976">MAKPAGDAAVGSRSGELFLPSVSSSATSPAPSAAPAPASVSLLSLNGEAPLIRGLSLVSQAPGEALAWAPRTSCPGENTSSGGKVSPYSLEISEKLFCSACDQIFQNHQEQREHYKLDWHRFNLKQRLKNKPLLSASDFEQQSSTGDLSSISGSDDTDSSSEEDLLPLDEGRAESEKPNRPPGFYPHRVLFKNAQGQFLYAYRCVLGPHQIPPEKAELLLQNLQNGGPRYYVVLMAAAGHFAGAIFQGREVVAHKTFHRYTVRAKRGTAQGLQDAHGRASRSAGANLRRYNEAMLYKDVRNLLAGPIWSKALGEAETVLFRAPRSGRSLFFGGQGAPLQRDDPRLWDIPLTTRRPTFGELQRVLHKLTTLQVYDEDPREMVRFHSPETHWKPVREERKKDTEKEKTKVPSDANKPLGQDEEPLKQGSESQEEDGSEVELELVELTLGTLDLREFEVLPKRRRRRKKKERSQEQQCGAHGPLPQQPQDEPFSQPTQEVETPLDTLVYEAKAPGQPELWDTLLAACRAGEVEVLKLQLATGLVDPGVKSLLNAPLGSGGFTLLHAAAAAGRGLVVRLLLEAGADPTVQDSRARPPYTVAADKSTRNEFRRFMEKNLDAYDYNKARVPGPLTQEMEARQATRKKEQKAARRQREQQQRKQREQEEQEQEEQRRFAALSDREKRALAAERRLAAQLGAPSPPVPDSAVASAGRCWSCGVSLQGLIPFHYLDFSFCSTRCLRDHRSQAGRPSS</sequence>